<name>NUOB_ESCF3</name>
<organism>
    <name type="scientific">Escherichia fergusonii (strain ATCC 35469 / DSM 13698 / CCUG 18766 / IAM 14443 / JCM 21226 / LMG 7866 / NBRC 102419 / NCTC 12128 / CDC 0568-73)</name>
    <dbReference type="NCBI Taxonomy" id="585054"/>
    <lineage>
        <taxon>Bacteria</taxon>
        <taxon>Pseudomonadati</taxon>
        <taxon>Pseudomonadota</taxon>
        <taxon>Gammaproteobacteria</taxon>
        <taxon>Enterobacterales</taxon>
        <taxon>Enterobacteriaceae</taxon>
        <taxon>Escherichia</taxon>
    </lineage>
</organism>
<protein>
    <recommendedName>
        <fullName evidence="1">NADH-quinone oxidoreductase subunit B</fullName>
        <ecNumber evidence="1">7.1.1.-</ecNumber>
    </recommendedName>
    <alternativeName>
        <fullName evidence="1">NADH dehydrogenase I subunit B</fullName>
    </alternativeName>
    <alternativeName>
        <fullName evidence="1">NDH-1 subunit B</fullName>
    </alternativeName>
</protein>
<gene>
    <name evidence="1" type="primary">nuoB</name>
    <name type="ordered locus">EFER_0883</name>
</gene>
<keyword id="KW-0004">4Fe-4S</keyword>
<keyword id="KW-0997">Cell inner membrane</keyword>
<keyword id="KW-1003">Cell membrane</keyword>
<keyword id="KW-0408">Iron</keyword>
<keyword id="KW-0411">Iron-sulfur</keyword>
<keyword id="KW-0472">Membrane</keyword>
<keyword id="KW-0479">Metal-binding</keyword>
<keyword id="KW-0520">NAD</keyword>
<keyword id="KW-0874">Quinone</keyword>
<keyword id="KW-1278">Translocase</keyword>
<keyword id="KW-0813">Transport</keyword>
<keyword id="KW-0830">Ubiquinone</keyword>
<comment type="function">
    <text evidence="1">NDH-1 shuttles electrons from NADH, via FMN and iron-sulfur (Fe-S) centers, to quinones in the respiratory chain. The immediate electron acceptor for the enzyme in this species is believed to be ubiquinone. Couples the redox reaction to proton translocation (for every two electrons transferred, four hydrogen ions are translocated across the cytoplasmic membrane), and thus conserves the redox energy in a proton gradient.</text>
</comment>
<comment type="catalytic activity">
    <reaction evidence="1">
        <text>a quinone + NADH + 5 H(+)(in) = a quinol + NAD(+) + 4 H(+)(out)</text>
        <dbReference type="Rhea" id="RHEA:57888"/>
        <dbReference type="ChEBI" id="CHEBI:15378"/>
        <dbReference type="ChEBI" id="CHEBI:24646"/>
        <dbReference type="ChEBI" id="CHEBI:57540"/>
        <dbReference type="ChEBI" id="CHEBI:57945"/>
        <dbReference type="ChEBI" id="CHEBI:132124"/>
    </reaction>
</comment>
<comment type="cofactor">
    <cofactor evidence="1">
        <name>[4Fe-4S] cluster</name>
        <dbReference type="ChEBI" id="CHEBI:49883"/>
    </cofactor>
    <text evidence="1">Binds 1 [4Fe-4S] cluster.</text>
</comment>
<comment type="subunit">
    <text evidence="1">NDH-1 is composed of 13 different subunits. Subunits NuoB, CD, E, F, and G constitute the peripheral sector of the complex.</text>
</comment>
<comment type="subcellular location">
    <subcellularLocation>
        <location evidence="1">Cell inner membrane</location>
        <topology evidence="1">Peripheral membrane protein</topology>
        <orientation evidence="1">Cytoplasmic side</orientation>
    </subcellularLocation>
</comment>
<comment type="similarity">
    <text evidence="1">Belongs to the complex I 20 kDa subunit family.</text>
</comment>
<evidence type="ECO:0000255" key="1">
    <source>
        <dbReference type="HAMAP-Rule" id="MF_01356"/>
    </source>
</evidence>
<feature type="chain" id="PRO_0000376223" description="NADH-quinone oxidoreductase subunit B">
    <location>
        <begin position="1"/>
        <end position="220"/>
    </location>
</feature>
<feature type="binding site" evidence="1">
    <location>
        <position position="63"/>
    </location>
    <ligand>
        <name>[4Fe-4S] cluster</name>
        <dbReference type="ChEBI" id="CHEBI:49883"/>
    </ligand>
</feature>
<feature type="binding site" evidence="1">
    <location>
        <position position="64"/>
    </location>
    <ligand>
        <name>[4Fe-4S] cluster</name>
        <dbReference type="ChEBI" id="CHEBI:49883"/>
    </ligand>
</feature>
<feature type="binding site" evidence="1">
    <location>
        <position position="129"/>
    </location>
    <ligand>
        <name>[4Fe-4S] cluster</name>
        <dbReference type="ChEBI" id="CHEBI:49883"/>
    </ligand>
</feature>
<feature type="binding site" evidence="1">
    <location>
        <position position="158"/>
    </location>
    <ligand>
        <name>[4Fe-4S] cluster</name>
        <dbReference type="ChEBI" id="CHEBI:49883"/>
    </ligand>
</feature>
<reference key="1">
    <citation type="journal article" date="2009" name="PLoS Genet.">
        <title>Organised genome dynamics in the Escherichia coli species results in highly diverse adaptive paths.</title>
        <authorList>
            <person name="Touchon M."/>
            <person name="Hoede C."/>
            <person name="Tenaillon O."/>
            <person name="Barbe V."/>
            <person name="Baeriswyl S."/>
            <person name="Bidet P."/>
            <person name="Bingen E."/>
            <person name="Bonacorsi S."/>
            <person name="Bouchier C."/>
            <person name="Bouvet O."/>
            <person name="Calteau A."/>
            <person name="Chiapello H."/>
            <person name="Clermont O."/>
            <person name="Cruveiller S."/>
            <person name="Danchin A."/>
            <person name="Diard M."/>
            <person name="Dossat C."/>
            <person name="Karoui M.E."/>
            <person name="Frapy E."/>
            <person name="Garry L."/>
            <person name="Ghigo J.M."/>
            <person name="Gilles A.M."/>
            <person name="Johnson J."/>
            <person name="Le Bouguenec C."/>
            <person name="Lescat M."/>
            <person name="Mangenot S."/>
            <person name="Martinez-Jehanne V."/>
            <person name="Matic I."/>
            <person name="Nassif X."/>
            <person name="Oztas S."/>
            <person name="Petit M.A."/>
            <person name="Pichon C."/>
            <person name="Rouy Z."/>
            <person name="Ruf C.S."/>
            <person name="Schneider D."/>
            <person name="Tourret J."/>
            <person name="Vacherie B."/>
            <person name="Vallenet D."/>
            <person name="Medigue C."/>
            <person name="Rocha E.P.C."/>
            <person name="Denamur E."/>
        </authorList>
    </citation>
    <scope>NUCLEOTIDE SEQUENCE [LARGE SCALE GENOMIC DNA]</scope>
    <source>
        <strain>ATCC 35469 / DSM 13698 / BCRC 15582 / CCUG 18766 / IAM 14443 / JCM 21226 / LMG 7866 / NBRC 102419 / NCTC 12128 / CDC 0568-73</strain>
    </source>
</reference>
<sequence length="220" mass="25056">MDYTLTRIDPNGENDRYPLQKQEIVTDPLEQEVNKNVFMGKLNDMVNWGRKNSIWPYNFGLSCCYVEMVTSFTAVHDVARFGAEVLRASPRQADLMVVAGTCFTKMAPVIQRLYDQMLEPKWVISMGACANSGGMYDIYSVVQGVDKFIPVDVYIPGCPPRPEAYMQALMLLQESIGKERRPLSWVVGDQGVYRANMQSERERKRGERIAVTNLRTPDEI</sequence>
<accession>B7LM45</accession>
<proteinExistence type="inferred from homology"/>
<dbReference type="EC" id="7.1.1.-" evidence="1"/>
<dbReference type="EMBL" id="CU928158">
    <property type="protein sequence ID" value="CAQ88418.1"/>
    <property type="molecule type" value="Genomic_DNA"/>
</dbReference>
<dbReference type="RefSeq" id="WP_000386733.1">
    <property type="nucleotide sequence ID" value="NC_011740.1"/>
</dbReference>
<dbReference type="SMR" id="B7LM45"/>
<dbReference type="GeneID" id="93774887"/>
<dbReference type="KEGG" id="efe:EFER_0883"/>
<dbReference type="HOGENOM" id="CLU_055737_7_3_6"/>
<dbReference type="OrthoDB" id="9786737at2"/>
<dbReference type="Proteomes" id="UP000000745">
    <property type="component" value="Chromosome"/>
</dbReference>
<dbReference type="GO" id="GO:0005886">
    <property type="term" value="C:plasma membrane"/>
    <property type="evidence" value="ECO:0007669"/>
    <property type="project" value="UniProtKB-SubCell"/>
</dbReference>
<dbReference type="GO" id="GO:0045271">
    <property type="term" value="C:respiratory chain complex I"/>
    <property type="evidence" value="ECO:0007669"/>
    <property type="project" value="TreeGrafter"/>
</dbReference>
<dbReference type="GO" id="GO:0051539">
    <property type="term" value="F:4 iron, 4 sulfur cluster binding"/>
    <property type="evidence" value="ECO:0007669"/>
    <property type="project" value="UniProtKB-KW"/>
</dbReference>
<dbReference type="GO" id="GO:0005506">
    <property type="term" value="F:iron ion binding"/>
    <property type="evidence" value="ECO:0007669"/>
    <property type="project" value="UniProtKB-UniRule"/>
</dbReference>
<dbReference type="GO" id="GO:0008137">
    <property type="term" value="F:NADH dehydrogenase (ubiquinone) activity"/>
    <property type="evidence" value="ECO:0007669"/>
    <property type="project" value="InterPro"/>
</dbReference>
<dbReference type="GO" id="GO:0050136">
    <property type="term" value="F:NADH:ubiquinone reductase (non-electrogenic) activity"/>
    <property type="evidence" value="ECO:0007669"/>
    <property type="project" value="UniProtKB-UniRule"/>
</dbReference>
<dbReference type="GO" id="GO:0048038">
    <property type="term" value="F:quinone binding"/>
    <property type="evidence" value="ECO:0007669"/>
    <property type="project" value="UniProtKB-KW"/>
</dbReference>
<dbReference type="GO" id="GO:0009060">
    <property type="term" value="P:aerobic respiration"/>
    <property type="evidence" value="ECO:0007669"/>
    <property type="project" value="TreeGrafter"/>
</dbReference>
<dbReference type="GO" id="GO:0015990">
    <property type="term" value="P:electron transport coupled proton transport"/>
    <property type="evidence" value="ECO:0007669"/>
    <property type="project" value="TreeGrafter"/>
</dbReference>
<dbReference type="FunFam" id="3.40.50.12280:FF:000002">
    <property type="entry name" value="NADH-quinone oxidoreductase subunit B"/>
    <property type="match status" value="1"/>
</dbReference>
<dbReference type="Gene3D" id="3.40.50.12280">
    <property type="match status" value="1"/>
</dbReference>
<dbReference type="HAMAP" id="MF_01356">
    <property type="entry name" value="NDH1_NuoB"/>
    <property type="match status" value="1"/>
</dbReference>
<dbReference type="InterPro" id="IPR006137">
    <property type="entry name" value="NADH_UbQ_OxRdtase-like_20kDa"/>
</dbReference>
<dbReference type="InterPro" id="IPR006138">
    <property type="entry name" value="NADH_UQ_OxRdtase_20Kd_su"/>
</dbReference>
<dbReference type="NCBIfam" id="TIGR01957">
    <property type="entry name" value="nuoB_fam"/>
    <property type="match status" value="1"/>
</dbReference>
<dbReference type="NCBIfam" id="NF005012">
    <property type="entry name" value="PRK06411.1"/>
    <property type="match status" value="1"/>
</dbReference>
<dbReference type="PANTHER" id="PTHR11995">
    <property type="entry name" value="NADH DEHYDROGENASE"/>
    <property type="match status" value="1"/>
</dbReference>
<dbReference type="PANTHER" id="PTHR11995:SF14">
    <property type="entry name" value="NADH DEHYDROGENASE [UBIQUINONE] IRON-SULFUR PROTEIN 7, MITOCHONDRIAL"/>
    <property type="match status" value="1"/>
</dbReference>
<dbReference type="Pfam" id="PF01058">
    <property type="entry name" value="Oxidored_q6"/>
    <property type="match status" value="1"/>
</dbReference>
<dbReference type="SUPFAM" id="SSF56770">
    <property type="entry name" value="HydA/Nqo6-like"/>
    <property type="match status" value="1"/>
</dbReference>
<dbReference type="PROSITE" id="PS01150">
    <property type="entry name" value="COMPLEX1_20K"/>
    <property type="match status" value="1"/>
</dbReference>